<dbReference type="EC" id="3.1.-.-" evidence="1"/>
<dbReference type="EC" id="3.6.4.-" evidence="1"/>
<dbReference type="EMBL" id="CP001033">
    <property type="protein sequence ID" value="ACB89657.1"/>
    <property type="molecule type" value="Genomic_DNA"/>
</dbReference>
<dbReference type="RefSeq" id="WP_001035032.1">
    <property type="nucleotide sequence ID" value="NC_010582.1"/>
</dbReference>
<dbReference type="SMR" id="B2ILV2"/>
<dbReference type="KEGG" id="spw:SPCG_0405"/>
<dbReference type="HOGENOM" id="CLU_011252_2_1_9"/>
<dbReference type="GO" id="GO:0005524">
    <property type="term" value="F:ATP binding"/>
    <property type="evidence" value="ECO:0007669"/>
    <property type="project" value="UniProtKB-UniRule"/>
</dbReference>
<dbReference type="GO" id="GO:0016887">
    <property type="term" value="F:ATP hydrolysis activity"/>
    <property type="evidence" value="ECO:0007669"/>
    <property type="project" value="InterPro"/>
</dbReference>
<dbReference type="GO" id="GO:0140664">
    <property type="term" value="F:ATP-dependent DNA damage sensor activity"/>
    <property type="evidence" value="ECO:0007669"/>
    <property type="project" value="InterPro"/>
</dbReference>
<dbReference type="GO" id="GO:0004519">
    <property type="term" value="F:endonuclease activity"/>
    <property type="evidence" value="ECO:0007669"/>
    <property type="project" value="UniProtKB-UniRule"/>
</dbReference>
<dbReference type="GO" id="GO:0030983">
    <property type="term" value="F:mismatched DNA binding"/>
    <property type="evidence" value="ECO:0007669"/>
    <property type="project" value="InterPro"/>
</dbReference>
<dbReference type="GO" id="GO:0043023">
    <property type="term" value="F:ribosomal large subunit binding"/>
    <property type="evidence" value="ECO:0007669"/>
    <property type="project" value="UniProtKB-UniRule"/>
</dbReference>
<dbReference type="GO" id="GO:0019843">
    <property type="term" value="F:rRNA binding"/>
    <property type="evidence" value="ECO:0007669"/>
    <property type="project" value="UniProtKB-UniRule"/>
</dbReference>
<dbReference type="GO" id="GO:0006298">
    <property type="term" value="P:mismatch repair"/>
    <property type="evidence" value="ECO:0007669"/>
    <property type="project" value="InterPro"/>
</dbReference>
<dbReference type="GO" id="GO:0045910">
    <property type="term" value="P:negative regulation of DNA recombination"/>
    <property type="evidence" value="ECO:0007669"/>
    <property type="project" value="InterPro"/>
</dbReference>
<dbReference type="GO" id="GO:0072344">
    <property type="term" value="P:rescue of stalled ribosome"/>
    <property type="evidence" value="ECO:0007669"/>
    <property type="project" value="UniProtKB-UniRule"/>
</dbReference>
<dbReference type="FunFam" id="3.30.1370.110:FF:000005">
    <property type="entry name" value="Endonuclease MutS2"/>
    <property type="match status" value="1"/>
</dbReference>
<dbReference type="FunFam" id="3.40.50.300:FF:000830">
    <property type="entry name" value="Endonuclease MutS2"/>
    <property type="match status" value="1"/>
</dbReference>
<dbReference type="Gene3D" id="3.30.1370.110">
    <property type="match status" value="1"/>
</dbReference>
<dbReference type="Gene3D" id="3.40.50.300">
    <property type="entry name" value="P-loop containing nucleotide triphosphate hydrolases"/>
    <property type="match status" value="1"/>
</dbReference>
<dbReference type="HAMAP" id="MF_00092">
    <property type="entry name" value="MutS2"/>
    <property type="match status" value="1"/>
</dbReference>
<dbReference type="InterPro" id="IPR000432">
    <property type="entry name" value="DNA_mismatch_repair_MutS_C"/>
</dbReference>
<dbReference type="InterPro" id="IPR007696">
    <property type="entry name" value="DNA_mismatch_repair_MutS_core"/>
</dbReference>
<dbReference type="InterPro" id="IPR036187">
    <property type="entry name" value="DNA_mismatch_repair_MutS_sf"/>
</dbReference>
<dbReference type="InterPro" id="IPR046893">
    <property type="entry name" value="MSSS"/>
</dbReference>
<dbReference type="InterPro" id="IPR045076">
    <property type="entry name" value="MutS"/>
</dbReference>
<dbReference type="InterPro" id="IPR005747">
    <property type="entry name" value="MutS2"/>
</dbReference>
<dbReference type="InterPro" id="IPR027417">
    <property type="entry name" value="P-loop_NTPase"/>
</dbReference>
<dbReference type="InterPro" id="IPR002625">
    <property type="entry name" value="Smr_dom"/>
</dbReference>
<dbReference type="InterPro" id="IPR036063">
    <property type="entry name" value="Smr_dom_sf"/>
</dbReference>
<dbReference type="NCBIfam" id="TIGR01069">
    <property type="entry name" value="mutS2"/>
    <property type="match status" value="1"/>
</dbReference>
<dbReference type="PANTHER" id="PTHR48466">
    <property type="entry name" value="OS10G0509000 PROTEIN-RELATED"/>
    <property type="match status" value="1"/>
</dbReference>
<dbReference type="PANTHER" id="PTHR48466:SF1">
    <property type="entry name" value="SMR DOMAIN-CONTAINING PROTEIN"/>
    <property type="match status" value="1"/>
</dbReference>
<dbReference type="Pfam" id="PF20297">
    <property type="entry name" value="MSSS"/>
    <property type="match status" value="1"/>
</dbReference>
<dbReference type="Pfam" id="PF00488">
    <property type="entry name" value="MutS_V"/>
    <property type="match status" value="1"/>
</dbReference>
<dbReference type="Pfam" id="PF01713">
    <property type="entry name" value="Smr"/>
    <property type="match status" value="1"/>
</dbReference>
<dbReference type="PIRSF" id="PIRSF005814">
    <property type="entry name" value="MutS_YshD"/>
    <property type="match status" value="1"/>
</dbReference>
<dbReference type="SMART" id="SM00534">
    <property type="entry name" value="MUTSac"/>
    <property type="match status" value="1"/>
</dbReference>
<dbReference type="SMART" id="SM00533">
    <property type="entry name" value="MUTSd"/>
    <property type="match status" value="1"/>
</dbReference>
<dbReference type="SMART" id="SM00463">
    <property type="entry name" value="SMR"/>
    <property type="match status" value="1"/>
</dbReference>
<dbReference type="SUPFAM" id="SSF48334">
    <property type="entry name" value="DNA repair protein MutS, domain III"/>
    <property type="match status" value="1"/>
</dbReference>
<dbReference type="SUPFAM" id="SSF52540">
    <property type="entry name" value="P-loop containing nucleoside triphosphate hydrolases"/>
    <property type="match status" value="1"/>
</dbReference>
<dbReference type="SUPFAM" id="SSF160443">
    <property type="entry name" value="SMR domain-like"/>
    <property type="match status" value="1"/>
</dbReference>
<dbReference type="PROSITE" id="PS00486">
    <property type="entry name" value="DNA_MISMATCH_REPAIR_2"/>
    <property type="match status" value="1"/>
</dbReference>
<dbReference type="PROSITE" id="PS50828">
    <property type="entry name" value="SMR"/>
    <property type="match status" value="1"/>
</dbReference>
<protein>
    <recommendedName>
        <fullName evidence="1">Endonuclease MutS2</fullName>
        <ecNumber evidence="1">3.1.-.-</ecNumber>
    </recommendedName>
    <alternativeName>
        <fullName evidence="1">Ribosome-associated protein quality control-upstream factor</fullName>
        <shortName evidence="1">RQC-upstream factor</shortName>
        <shortName evidence="1">RqcU</shortName>
        <ecNumber evidence="1">3.6.4.-</ecNumber>
    </alternativeName>
</protein>
<accession>B2ILV2</accession>
<proteinExistence type="inferred from homology"/>
<gene>
    <name evidence="1" type="primary">mutS2</name>
    <name evidence="1" type="synonym">rqcU</name>
    <name type="ordered locus">SPCG_0405</name>
</gene>
<sequence length="778" mass="87612">MNKKILETLEFDKVKALFEPHLLTEQGLEQLRQLAPTAKADKIKQAFAEMKEMQALFVEQPHFTILSTKEIAGVCKRLEMGADLNIEEFLLLKRVLLTSRELQSFYANLENVSLEELALWFEKLHDFPQLQGNLQAFNDAGFIENFASEELARIRRKIHDSESQVRDVLQDLLKQKAQMLTEGIVASRNGRQVLPVKNTYRNKIAGVVHDISASGNTVYIEPREVVKLSEEIASLRADERYEMLRILQEISERVRPHAAEIANDAWIIGHLDLIRAKVRFIQERQAVVPQLSENQEIQLLHVCHPLVKNAVANDVYFGQDLTAIVITGPNTGGKTIMLKTLGLTQVMAQSGLPILADKGSRVGIFEEIFADIGDEQSIEQSLSTFSSHMTNIVDILGKVNQHSLLLLDELGAGTDPQEGAALAMAILEDLRLRQIKTMATTHYPELKAYGIETAFVQNASMEFDTATLRPTYRFMQGVPGRSNAFEIAKRLGLSEVIVGDASQQIDQDNDVNRIIEQLEEQTLESRKRLDNIREVEQENLKMNRALKKLYNELNREKETELNKAREQAAEIVDMALSESDQILKNLHSKSQLKPHEIIEAKAKLKKLAPEKVDLSKNKVLQKAKKKRAPKVGDDIVVLSYGQRGTLTSQLKDGRWEAQVGLIKMTLEEKEFDLVQAQQEKPVKKKQVNVVKRTSGRGPQARLDLRGKRYEEAMNELDTFIDQALLNNMAQVDIIHGIGTGVIREGVTKYLQRNKHVKSFGYAPQNAGGSGATIVTFKG</sequence>
<feature type="chain" id="PRO_1000093399" description="Endonuclease MutS2">
    <location>
        <begin position="1"/>
        <end position="778"/>
    </location>
</feature>
<feature type="domain" description="Smr" evidence="1">
    <location>
        <begin position="702"/>
        <end position="777"/>
    </location>
</feature>
<feature type="binding site" evidence="1">
    <location>
        <begin position="328"/>
        <end position="335"/>
    </location>
    <ligand>
        <name>ATP</name>
        <dbReference type="ChEBI" id="CHEBI:30616"/>
    </ligand>
</feature>
<organism>
    <name type="scientific">Streptococcus pneumoniae (strain CGSP14)</name>
    <dbReference type="NCBI Taxonomy" id="516950"/>
    <lineage>
        <taxon>Bacteria</taxon>
        <taxon>Bacillati</taxon>
        <taxon>Bacillota</taxon>
        <taxon>Bacilli</taxon>
        <taxon>Lactobacillales</taxon>
        <taxon>Streptococcaceae</taxon>
        <taxon>Streptococcus</taxon>
    </lineage>
</organism>
<name>MUTS2_STRPS</name>
<comment type="function">
    <text evidence="1">Endonuclease that is involved in the suppression of homologous recombination and thus may have a key role in the control of bacterial genetic diversity.</text>
</comment>
<comment type="function">
    <text evidence="1">Acts as a ribosome collision sensor, splitting the ribosome into its 2 subunits. Detects stalled/collided 70S ribosomes which it binds and splits by an ATP-hydrolysis driven conformational change. Acts upstream of the ribosome quality control system (RQC), a ribosome-associated complex that mediates the extraction of incompletely synthesized nascent chains from stalled ribosomes and their subsequent degradation. Probably generates substrates for RQC.</text>
</comment>
<comment type="subunit">
    <text evidence="1">Homodimer. Binds to stalled ribosomes, contacting rRNA.</text>
</comment>
<comment type="similarity">
    <text evidence="1">Belongs to the DNA mismatch repair MutS family. MutS2 subfamily.</text>
</comment>
<reference key="1">
    <citation type="journal article" date="2009" name="BMC Genomics">
        <title>Genome evolution driven by host adaptations results in a more virulent and antimicrobial-resistant Streptococcus pneumoniae serotype 14.</title>
        <authorList>
            <person name="Ding F."/>
            <person name="Tang P."/>
            <person name="Hsu M.-H."/>
            <person name="Cui P."/>
            <person name="Hu S."/>
            <person name="Yu J."/>
            <person name="Chiu C.-H."/>
        </authorList>
    </citation>
    <scope>NUCLEOTIDE SEQUENCE [LARGE SCALE GENOMIC DNA]</scope>
    <source>
        <strain>CGSP14</strain>
    </source>
</reference>
<evidence type="ECO:0000255" key="1">
    <source>
        <dbReference type="HAMAP-Rule" id="MF_00092"/>
    </source>
</evidence>
<keyword id="KW-0067">ATP-binding</keyword>
<keyword id="KW-0238">DNA-binding</keyword>
<keyword id="KW-0255">Endonuclease</keyword>
<keyword id="KW-0378">Hydrolase</keyword>
<keyword id="KW-0540">Nuclease</keyword>
<keyword id="KW-0547">Nucleotide-binding</keyword>
<keyword id="KW-0694">RNA-binding</keyword>
<keyword id="KW-0699">rRNA-binding</keyword>